<organismHost>
    <name type="scientific">Bos taurus</name>
    <name type="common">Bovine</name>
    <dbReference type="NCBI Taxonomy" id="9913"/>
</organismHost>
<keyword id="KW-0024">Alternative initiation</keyword>
<keyword id="KW-1015">Disulfide bond</keyword>
<keyword id="KW-0325">Glycoprotein</keyword>
<keyword id="KW-1032">Host cell membrane</keyword>
<keyword id="KW-1043">Host membrane</keyword>
<keyword id="KW-0945">Host-virus interaction</keyword>
<keyword id="KW-0472">Membrane</keyword>
<keyword id="KW-0964">Secreted</keyword>
<keyword id="KW-0812">Transmembrane</keyword>
<keyword id="KW-1133">Transmembrane helix</keyword>
<keyword id="KW-1161">Viral attachment to host cell</keyword>
<keyword id="KW-0899">Viral immunoevasion</keyword>
<keyword id="KW-0946">Virion</keyword>
<keyword id="KW-1160">Virus entry into host cell</keyword>
<organism>
    <name type="scientific">Bovine respiratory syncytial virus (strain 220-60)</name>
    <name type="common">BRS</name>
    <dbReference type="NCBI Taxonomy" id="82819"/>
    <lineage>
        <taxon>Viruses</taxon>
        <taxon>Riboviria</taxon>
        <taxon>Orthornavirae</taxon>
        <taxon>Negarnaviricota</taxon>
        <taxon>Haploviricotina</taxon>
        <taxon>Monjiviricetes</taxon>
        <taxon>Mononegavirales</taxon>
        <taxon>Pneumoviridae</taxon>
        <taxon>Orthopneumovirus</taxon>
        <taxon>Orthopneumovirus bovis</taxon>
    </lineage>
</organism>
<comment type="function">
    <molecule>Isoform Membrane-bound glycoprotein G</molecule>
    <text evidence="1">Attaches the virion to the host cell membrane by interacting with heparan sulfate, initiating the infection. Unlike the other paramyxovirus attachment proteins, lacks both neuraminidase and hemagglutinating activities.</text>
</comment>
<comment type="function">
    <molecule>Isoform Secreted glycoprotein G</molecule>
    <text evidence="1">Helps the virus escape antibody-dependent restriction of replication by acting as an antigen decoy and by modulating the activity of leukocytes bearing Fc-gamma receptors.</text>
</comment>
<comment type="subunit">
    <molecule>Isoform Membrane-bound glycoprotein G</molecule>
    <text evidence="1">Homooligomer. Interacts (via N-terminus) with protein M. Part of a complex composed of F1, F2 and G glycoproteins. Interacts with protein SH. Interacts with host heparate sulfate; this interaction probably participates in the viral attachment to the host cell.</text>
</comment>
<comment type="subcellular location">
    <molecule>Isoform Membrane-bound glycoprotein G</molecule>
    <subcellularLocation>
        <location evidence="1">Virion membrane</location>
        <topology evidence="1">Single-pass type II membrane protein</topology>
    </subcellularLocation>
    <subcellularLocation>
        <location evidence="1">Host cell membrane</location>
        <topology evidence="1">Single-pass type II membrane protein</topology>
    </subcellularLocation>
</comment>
<comment type="subcellular location">
    <molecule>Isoform Secreted glycoprotein G</molecule>
    <subcellularLocation>
        <location evidence="2">Secreted</location>
    </subcellularLocation>
    <text evidence="2">The protein is shed from infected cells before the appearance of progeny virus. The initiation at the downstream methionine removes a portion of the transmembrane domain. The remaining hydrophobic portion of the sG protein is essential for translocating it into the lumen of the ER during translation and would likely maintain its membrane association until a proteolytic event releases the mature sG protein into the medium.</text>
</comment>
<comment type="alternative products">
    <event type="alternative initiation"/>
    <isoform>
        <id>O10685-1</id>
        <name>Membrane-bound glycoprotein G</name>
        <sequence type="displayed"/>
    </isoform>
    <isoform>
        <id>O10685-2</id>
        <name>Secreted glycoprotein G</name>
        <sequence type="described" ref="VSP_036511"/>
    </isoform>
</comment>
<comment type="domain">
    <molecule>Isoform Membrane-bound glycoprotein G</molecule>
    <text evidence="1">Contains a linear heparin binding domain essential for virus attachment to the host.</text>
</comment>
<comment type="PTM">
    <molecule>Isoform Secreted glycoprotein G</molecule>
    <text evidence="2">Cleaved to give rise to the mature sG protein which lacks the transmembrane domain.</text>
</comment>
<comment type="PTM">
    <molecule>Isoform Membrane-bound glycoprotein G</molecule>
    <text evidence="1">N- and O-glycosylated. May carry 30-40 separate O-linked carbohydrate chains distributed among the serine and threonine residues.</text>
</comment>
<comment type="PTM">
    <molecule>Isoform Membrane-bound glycoprotein G</molecule>
    <text evidence="1">Palmitoylated.</text>
</comment>
<comment type="similarity">
    <text evidence="5">Belongs to the pneumoviruses glycoprotein G family.</text>
</comment>
<feature type="chain" id="PRO_0000142843" description="Major surface glycoprotein G">
    <location>
        <begin position="1"/>
        <end position="263"/>
    </location>
</feature>
<feature type="chain" id="PRO_0000451312" description="Mature secreted glycoprotein G">
    <location>
        <begin position="66"/>
        <end position="263"/>
    </location>
</feature>
<feature type="topological domain" description="Cytoplasmic" evidence="3">
    <location>
        <begin position="1"/>
        <end position="37"/>
    </location>
</feature>
<feature type="transmembrane region" description="Helical" evidence="3">
    <location>
        <begin position="38"/>
        <end position="66"/>
    </location>
</feature>
<feature type="topological domain" description="Extracellular" evidence="3">
    <location>
        <begin position="67"/>
        <end position="263"/>
    </location>
</feature>
<feature type="region of interest" description="Disordered" evidence="4">
    <location>
        <begin position="69"/>
        <end position="166"/>
    </location>
</feature>
<feature type="region of interest" description="Binding to host heparan sulfate" evidence="1">
    <location>
        <begin position="187"/>
        <end position="198"/>
    </location>
</feature>
<feature type="region of interest" description="Disordered" evidence="4">
    <location>
        <begin position="223"/>
        <end position="263"/>
    </location>
</feature>
<feature type="compositionally biased region" description="Low complexity" evidence="4">
    <location>
        <begin position="72"/>
        <end position="92"/>
    </location>
</feature>
<feature type="compositionally biased region" description="Low complexity" evidence="4">
    <location>
        <begin position="100"/>
        <end position="110"/>
    </location>
</feature>
<feature type="compositionally biased region" description="Polar residues" evidence="4">
    <location>
        <begin position="111"/>
        <end position="121"/>
    </location>
</feature>
<feature type="compositionally biased region" description="Polar residues" evidence="4">
    <location>
        <begin position="151"/>
        <end position="166"/>
    </location>
</feature>
<feature type="compositionally biased region" description="Polar residues" evidence="4">
    <location>
        <begin position="232"/>
        <end position="263"/>
    </location>
</feature>
<feature type="site" description="Cleavage" evidence="1">
    <location>
        <begin position="65"/>
        <end position="66"/>
    </location>
</feature>
<feature type="glycosylation site" description="O-linked (GalNAc...) threonine; by host" evidence="1">
    <location>
        <position position="72"/>
    </location>
</feature>
<feature type="glycosylation site" description="O-linked (GalNAc...) threonine; by host" evidence="1">
    <location>
        <position position="80"/>
    </location>
</feature>
<feature type="glycosylation site" description="O-linked (GalNAc...) threonine; by host" evidence="1">
    <location>
        <position position="87"/>
    </location>
</feature>
<feature type="glycosylation site" description="O-linked (GalNAc...) threonine; by host" evidence="1">
    <location>
        <position position="92"/>
    </location>
</feature>
<feature type="glycosylation site" description="O-linked (GalNAc...) serine; by host" evidence="3">
    <location>
        <position position="105"/>
    </location>
</feature>
<feature type="glycosylation site" description="N-linked (GlcNAc...) asparagine; by host" evidence="3">
    <location>
        <position position="127"/>
    </location>
</feature>
<feature type="glycosylation site" description="O-linked (GalNAc...) threonine; by host" evidence="3">
    <location>
        <position position="139"/>
    </location>
</feature>
<feature type="glycosylation site" description="N-linked (GlcNAc...) asparagine; by host" evidence="3">
    <location>
        <position position="163"/>
    </location>
</feature>
<feature type="glycosylation site" description="O-linked (GalNAc...) threonine; by host" evidence="3">
    <location>
        <position position="199"/>
    </location>
</feature>
<feature type="glycosylation site" description="O-linked (GalNAc...) threonine; by host" evidence="3">
    <location>
        <position position="215"/>
    </location>
</feature>
<feature type="glycosylation site" description="O-linked (GalNAc...) threonine; by host" evidence="3">
    <location>
        <position position="231"/>
    </location>
</feature>
<feature type="glycosylation site" description="N-linked (GlcNAc...) asparagine; by host" evidence="3">
    <location>
        <position position="251"/>
    </location>
</feature>
<feature type="glycosylation site" description="O-linked (GalNAc...) serine; by host" evidence="3">
    <location>
        <position position="253"/>
    </location>
</feature>
<feature type="disulfide bond" evidence="1">
    <location>
        <begin position="173"/>
        <end position="186"/>
    </location>
</feature>
<feature type="disulfide bond" evidence="1">
    <location>
        <begin position="176"/>
        <end position="182"/>
    </location>
</feature>
<feature type="splice variant" id="VSP_036511" description="In isoform Secreted glycoprotein G." evidence="1">
    <location>
        <begin position="1"/>
        <end position="47"/>
    </location>
</feature>
<reference key="1">
    <citation type="journal article" date="1997" name="Virology">
        <title>Antigenically distinct G glycoproteins of BRSV strains share a high degree of genetic homogeneity.</title>
        <authorList>
            <person name="Furze J."/>
            <person name="Roberts S."/>
            <person name="Wertz G."/>
            <person name="Taylor G."/>
        </authorList>
    </citation>
    <scope>NUCLEOTIDE SEQUENCE [MRNA]</scope>
</reference>
<protein>
    <recommendedName>
        <fullName>Major surface glycoprotein G</fullName>
    </recommendedName>
    <alternativeName>
        <fullName>Attachment glycoprotein G</fullName>
    </alternativeName>
    <alternativeName>
        <fullName>Membrane-bound glycoprotein</fullName>
        <shortName>mG</shortName>
    </alternativeName>
    <component>
        <recommendedName>
            <fullName evidence="2">Mature secreted glycoprotein G</fullName>
            <shortName evidence="2">Mature sG</shortName>
        </recommendedName>
    </component>
</protein>
<dbReference type="EMBL" id="Y11205">
    <property type="protein sequence ID" value="CAA72089.1"/>
    <property type="molecule type" value="mRNA"/>
</dbReference>
<dbReference type="SMR" id="O10685"/>
<dbReference type="GlyCosmos" id="O10685">
    <property type="glycosylation" value="13 sites, No reported glycans"/>
</dbReference>
<dbReference type="GO" id="GO:0005576">
    <property type="term" value="C:extracellular region"/>
    <property type="evidence" value="ECO:0007669"/>
    <property type="project" value="UniProtKB-SubCell"/>
</dbReference>
<dbReference type="GO" id="GO:0020002">
    <property type="term" value="C:host cell plasma membrane"/>
    <property type="evidence" value="ECO:0007669"/>
    <property type="project" value="UniProtKB-SubCell"/>
</dbReference>
<dbReference type="GO" id="GO:0016020">
    <property type="term" value="C:membrane"/>
    <property type="evidence" value="ECO:0007669"/>
    <property type="project" value="UniProtKB-KW"/>
</dbReference>
<dbReference type="GO" id="GO:0055036">
    <property type="term" value="C:virion membrane"/>
    <property type="evidence" value="ECO:0007669"/>
    <property type="project" value="UniProtKB-SubCell"/>
</dbReference>
<dbReference type="GO" id="GO:0046718">
    <property type="term" value="P:symbiont entry into host cell"/>
    <property type="evidence" value="ECO:0007669"/>
    <property type="project" value="UniProtKB-KW"/>
</dbReference>
<dbReference type="GO" id="GO:0019062">
    <property type="term" value="P:virion attachment to host cell"/>
    <property type="evidence" value="ECO:0007669"/>
    <property type="project" value="UniProtKB-KW"/>
</dbReference>
<dbReference type="InterPro" id="IPR000925">
    <property type="entry name" value="G_prot"/>
</dbReference>
<dbReference type="Pfam" id="PF00802">
    <property type="entry name" value="Glycoprotein_G"/>
    <property type="match status" value="1"/>
</dbReference>
<proteinExistence type="evidence at transcript level"/>
<gene>
    <name type="primary">G</name>
</gene>
<evidence type="ECO:0000250" key="1">
    <source>
        <dbReference type="UniProtKB" id="P03423"/>
    </source>
</evidence>
<evidence type="ECO:0000250" key="2">
    <source>
        <dbReference type="UniProtKB" id="P20895"/>
    </source>
</evidence>
<evidence type="ECO:0000255" key="3"/>
<evidence type="ECO:0000256" key="4">
    <source>
        <dbReference type="SAM" id="MobiDB-lite"/>
    </source>
</evidence>
<evidence type="ECO:0000305" key="5"/>
<name>GLYC_BRSV2</name>
<accession>O10685</accession>
<sequence>MSNHTHHPKFKTLKRAWKASKYFIVGLSCLYKFNLKSLVQTALTSLAMITLTSLVITAIIYISVGNAKAKPTSKPTTQQTQQPQNHTPLLPTEHNHKSTHTSTQSTTLSQPPNIDTTSGTTYGHPINRTQNRKIKSQSTPLATRKLPINPLESNPPENHQDHNNSQTLPHVPCSTCEGNPACSPLCQIGLERAPSRAPTITLKKAPKPKTTKKPTKTTIYHRTSPEAKLQTKKNTATPQQGILSSPEHQTNQSTTQISQHTSI</sequence>